<keyword id="KW-1015">Disulfide bond</keyword>
<keyword id="KW-0255">Endonuclease</keyword>
<keyword id="KW-0325">Glycoprotein</keyword>
<keyword id="KW-0378">Hydrolase</keyword>
<keyword id="KW-0540">Nuclease</keyword>
<keyword id="KW-1185">Reference proteome</keyword>
<keyword id="KW-0732">Signal</keyword>
<accession>O35290</accession>
<reference key="1">
    <citation type="journal article" date="1997" name="Nucleic Acids Res.">
        <title>Molecular cloning of four novel murine ribonuclease genes: unusual expansion within the ribonuclease A gene family.</title>
        <authorList>
            <person name="Batten D."/>
            <person name="Dyer K.D."/>
            <person name="Domachowske J.B."/>
            <person name="Rosenberg H.F."/>
        </authorList>
    </citation>
    <scope>NUCLEOTIDE SEQUENCE [GENOMIC DNA]</scope>
    <source>
        <tissue>Fibroblast</tissue>
    </source>
</reference>
<reference key="2">
    <citation type="journal article" date="2010" name="Cell">
        <title>A tissue-specific atlas of mouse protein phosphorylation and expression.</title>
        <authorList>
            <person name="Huttlin E.L."/>
            <person name="Jedrychowski M.P."/>
            <person name="Elias J.E."/>
            <person name="Goswami T."/>
            <person name="Rad R."/>
            <person name="Beausoleil S.A."/>
            <person name="Villen J."/>
            <person name="Haas W."/>
            <person name="Sowa M.E."/>
            <person name="Gygi S.P."/>
        </authorList>
    </citation>
    <scope>IDENTIFICATION BY MASS SPECTROMETRY [LARGE SCALE ANALYSIS]</scope>
    <source>
        <tissue>Brown adipose tissue</tissue>
        <tissue>Kidney</tissue>
        <tissue>Lung</tissue>
        <tissue>Spleen</tissue>
    </source>
</reference>
<comment type="similarity">
    <text evidence="3">Belongs to the pancreatic ribonuclease family.</text>
</comment>
<sequence>MGPKLLESRLCLLLLLRLVLMLASCLGQTPSRWFAIQHINNNTNLRCNVEMLRINRFRRTCKGLNTFLHTSFANAVGVCGNPSGLCSDNISRNCHNSSSRVHITVCNITSRRRIPYTQCRYQPRRSVEYYTVACNPRTSLDSPMYPVVPVHLDGTF</sequence>
<dbReference type="EMBL" id="AF017258">
    <property type="protein sequence ID" value="AAC53489.1"/>
    <property type="molecule type" value="Genomic_DNA"/>
</dbReference>
<dbReference type="RefSeq" id="NP_059084.1">
    <property type="nucleotide sequence ID" value="NM_017388.1"/>
</dbReference>
<dbReference type="SMR" id="O35290"/>
<dbReference type="FunCoup" id="O35290">
    <property type="interactions" value="223"/>
</dbReference>
<dbReference type="GlyCosmos" id="O35290">
    <property type="glycosylation" value="4 sites, No reported glycans"/>
</dbReference>
<dbReference type="GlyGen" id="O35290">
    <property type="glycosylation" value="5 sites, 1 O-linked glycan (1 site)"/>
</dbReference>
<dbReference type="PhosphoSitePlus" id="O35290"/>
<dbReference type="jPOST" id="O35290"/>
<dbReference type="PeptideAtlas" id="O35290"/>
<dbReference type="ProteomicsDB" id="277439"/>
<dbReference type="DNASU" id="53876"/>
<dbReference type="GeneID" id="53876"/>
<dbReference type="KEGG" id="mmu:53876"/>
<dbReference type="UCSC" id="uc011zjh.1">
    <property type="organism name" value="mouse"/>
</dbReference>
<dbReference type="AGR" id="MGI:1858237"/>
<dbReference type="CTD" id="53876"/>
<dbReference type="MGI" id="MGI:1858237">
    <property type="gene designation" value="Ear3"/>
</dbReference>
<dbReference type="InParanoid" id="O35290"/>
<dbReference type="BioGRID-ORCS" id="53876">
    <property type="hits" value="3 hits in 16 CRISPR screens"/>
</dbReference>
<dbReference type="ChiTaRS" id="Nr2f2">
    <property type="organism name" value="mouse"/>
</dbReference>
<dbReference type="PRO" id="PR:O35290"/>
<dbReference type="Proteomes" id="UP000000589">
    <property type="component" value="Unplaced"/>
</dbReference>
<dbReference type="RNAct" id="O35290">
    <property type="molecule type" value="protein"/>
</dbReference>
<dbReference type="GO" id="GO:0004519">
    <property type="term" value="F:endonuclease activity"/>
    <property type="evidence" value="ECO:0007669"/>
    <property type="project" value="UniProtKB-KW"/>
</dbReference>
<dbReference type="GO" id="GO:0003676">
    <property type="term" value="F:nucleic acid binding"/>
    <property type="evidence" value="ECO:0007669"/>
    <property type="project" value="InterPro"/>
</dbReference>
<dbReference type="CDD" id="cd06265">
    <property type="entry name" value="RNase_A_canonical"/>
    <property type="match status" value="1"/>
</dbReference>
<dbReference type="FunFam" id="3.10.130.10:FF:000001">
    <property type="entry name" value="Ribonuclease pancreatic"/>
    <property type="match status" value="1"/>
</dbReference>
<dbReference type="Gene3D" id="3.10.130.10">
    <property type="entry name" value="Ribonuclease A-like domain"/>
    <property type="match status" value="1"/>
</dbReference>
<dbReference type="InterPro" id="IPR001427">
    <property type="entry name" value="RNaseA"/>
</dbReference>
<dbReference type="InterPro" id="IPR036816">
    <property type="entry name" value="RNaseA-like_dom_sf"/>
</dbReference>
<dbReference type="InterPro" id="IPR023411">
    <property type="entry name" value="RNaseA_AS"/>
</dbReference>
<dbReference type="InterPro" id="IPR023412">
    <property type="entry name" value="RNaseA_domain"/>
</dbReference>
<dbReference type="PANTHER" id="PTHR11437:SF3">
    <property type="entry name" value="EOSINOPHIL CATIONIC PROTEIN"/>
    <property type="match status" value="1"/>
</dbReference>
<dbReference type="PANTHER" id="PTHR11437">
    <property type="entry name" value="RIBONUCLEASE"/>
    <property type="match status" value="1"/>
</dbReference>
<dbReference type="Pfam" id="PF00074">
    <property type="entry name" value="RnaseA"/>
    <property type="match status" value="1"/>
</dbReference>
<dbReference type="PRINTS" id="PR00794">
    <property type="entry name" value="RIBONUCLEASE"/>
</dbReference>
<dbReference type="SMART" id="SM00092">
    <property type="entry name" value="RNAse_Pc"/>
    <property type="match status" value="1"/>
</dbReference>
<dbReference type="SUPFAM" id="SSF54076">
    <property type="entry name" value="RNase A-like"/>
    <property type="match status" value="1"/>
</dbReference>
<dbReference type="PROSITE" id="PS00127">
    <property type="entry name" value="RNASE_PANCREATIC"/>
    <property type="match status" value="1"/>
</dbReference>
<name>ECP3_MOUSE</name>
<gene>
    <name type="primary">Ear3</name>
    <name type="synonym">Rnase3</name>
</gene>
<proteinExistence type="evidence at protein level"/>
<evidence type="ECO:0000250" key="1"/>
<evidence type="ECO:0000255" key="2"/>
<evidence type="ECO:0000305" key="3"/>
<protein>
    <recommendedName>
        <fullName>Eosinophil cationic-type ribonuclease 3</fullName>
    </recommendedName>
    <alternativeName>
        <fullName>MR-3</fullName>
    </alternativeName>
</protein>
<organism>
    <name type="scientific">Mus musculus</name>
    <name type="common">Mouse</name>
    <dbReference type="NCBI Taxonomy" id="10090"/>
    <lineage>
        <taxon>Eukaryota</taxon>
        <taxon>Metazoa</taxon>
        <taxon>Chordata</taxon>
        <taxon>Craniata</taxon>
        <taxon>Vertebrata</taxon>
        <taxon>Euteleostomi</taxon>
        <taxon>Mammalia</taxon>
        <taxon>Eutheria</taxon>
        <taxon>Euarchontoglires</taxon>
        <taxon>Glires</taxon>
        <taxon>Rodentia</taxon>
        <taxon>Myomorpha</taxon>
        <taxon>Muroidea</taxon>
        <taxon>Muridae</taxon>
        <taxon>Murinae</taxon>
        <taxon>Mus</taxon>
        <taxon>Mus</taxon>
    </lineage>
</organism>
<feature type="signal peptide" evidence="2">
    <location>
        <begin position="1"/>
        <end position="25"/>
    </location>
</feature>
<feature type="chain" id="PRO_0000030869" description="Eosinophil cationic-type ribonuclease 3">
    <location>
        <begin position="26"/>
        <end position="156"/>
    </location>
</feature>
<feature type="active site" description="Proton acceptor" evidence="1">
    <location>
        <position position="38"/>
    </location>
</feature>
<feature type="active site" description="Proton donor" evidence="1">
    <location>
        <position position="151"/>
    </location>
</feature>
<feature type="binding site" evidence="1">
    <location>
        <begin position="62"/>
        <end position="66"/>
    </location>
    <ligand>
        <name>substrate</name>
    </ligand>
</feature>
<feature type="glycosylation site" description="N-linked (GlcNAc...) asparagine" evidence="2">
    <location>
        <position position="41"/>
    </location>
</feature>
<feature type="glycosylation site" description="N-linked (GlcNAc...) asparagine" evidence="2">
    <location>
        <position position="89"/>
    </location>
</feature>
<feature type="glycosylation site" description="N-linked (GlcNAc...) asparagine" evidence="2">
    <location>
        <position position="96"/>
    </location>
</feature>
<feature type="glycosylation site" description="N-linked (GlcNAc...) asparagine" evidence="2">
    <location>
        <position position="107"/>
    </location>
</feature>
<feature type="disulfide bond" evidence="1">
    <location>
        <begin position="47"/>
        <end position="106"/>
    </location>
</feature>
<feature type="disulfide bond" evidence="1">
    <location>
        <begin position="61"/>
        <end position="119"/>
    </location>
</feature>
<feature type="disulfide bond" evidence="1">
    <location>
        <begin position="79"/>
        <end position="134"/>
    </location>
</feature>
<feature type="disulfide bond" evidence="1">
    <location>
        <begin position="86"/>
        <end position="94"/>
    </location>
</feature>